<reference key="1">
    <citation type="journal article" date="1997" name="Nature">
        <title>The complete genome sequence of the Gram-positive bacterium Bacillus subtilis.</title>
        <authorList>
            <person name="Kunst F."/>
            <person name="Ogasawara N."/>
            <person name="Moszer I."/>
            <person name="Albertini A.M."/>
            <person name="Alloni G."/>
            <person name="Azevedo V."/>
            <person name="Bertero M.G."/>
            <person name="Bessieres P."/>
            <person name="Bolotin A."/>
            <person name="Borchert S."/>
            <person name="Borriss R."/>
            <person name="Boursier L."/>
            <person name="Brans A."/>
            <person name="Braun M."/>
            <person name="Brignell S.C."/>
            <person name="Bron S."/>
            <person name="Brouillet S."/>
            <person name="Bruschi C.V."/>
            <person name="Caldwell B."/>
            <person name="Capuano V."/>
            <person name="Carter N.M."/>
            <person name="Choi S.-K."/>
            <person name="Codani J.-J."/>
            <person name="Connerton I.F."/>
            <person name="Cummings N.J."/>
            <person name="Daniel R.A."/>
            <person name="Denizot F."/>
            <person name="Devine K.M."/>
            <person name="Duesterhoeft A."/>
            <person name="Ehrlich S.D."/>
            <person name="Emmerson P.T."/>
            <person name="Entian K.-D."/>
            <person name="Errington J."/>
            <person name="Fabret C."/>
            <person name="Ferrari E."/>
            <person name="Foulger D."/>
            <person name="Fritz C."/>
            <person name="Fujita M."/>
            <person name="Fujita Y."/>
            <person name="Fuma S."/>
            <person name="Galizzi A."/>
            <person name="Galleron N."/>
            <person name="Ghim S.-Y."/>
            <person name="Glaser P."/>
            <person name="Goffeau A."/>
            <person name="Golightly E.J."/>
            <person name="Grandi G."/>
            <person name="Guiseppi G."/>
            <person name="Guy B.J."/>
            <person name="Haga K."/>
            <person name="Haiech J."/>
            <person name="Harwood C.R."/>
            <person name="Henaut A."/>
            <person name="Hilbert H."/>
            <person name="Holsappel S."/>
            <person name="Hosono S."/>
            <person name="Hullo M.-F."/>
            <person name="Itaya M."/>
            <person name="Jones L.-M."/>
            <person name="Joris B."/>
            <person name="Karamata D."/>
            <person name="Kasahara Y."/>
            <person name="Klaerr-Blanchard M."/>
            <person name="Klein C."/>
            <person name="Kobayashi Y."/>
            <person name="Koetter P."/>
            <person name="Koningstein G."/>
            <person name="Krogh S."/>
            <person name="Kumano M."/>
            <person name="Kurita K."/>
            <person name="Lapidus A."/>
            <person name="Lardinois S."/>
            <person name="Lauber J."/>
            <person name="Lazarevic V."/>
            <person name="Lee S.-M."/>
            <person name="Levine A."/>
            <person name="Liu H."/>
            <person name="Masuda S."/>
            <person name="Mauel C."/>
            <person name="Medigue C."/>
            <person name="Medina N."/>
            <person name="Mellado R.P."/>
            <person name="Mizuno M."/>
            <person name="Moestl D."/>
            <person name="Nakai S."/>
            <person name="Noback M."/>
            <person name="Noone D."/>
            <person name="O'Reilly M."/>
            <person name="Ogawa K."/>
            <person name="Ogiwara A."/>
            <person name="Oudega B."/>
            <person name="Park S.-H."/>
            <person name="Parro V."/>
            <person name="Pohl T.M."/>
            <person name="Portetelle D."/>
            <person name="Porwollik S."/>
            <person name="Prescott A.M."/>
            <person name="Presecan E."/>
            <person name="Pujic P."/>
            <person name="Purnelle B."/>
            <person name="Rapoport G."/>
            <person name="Rey M."/>
            <person name="Reynolds S."/>
            <person name="Rieger M."/>
            <person name="Rivolta C."/>
            <person name="Rocha E."/>
            <person name="Roche B."/>
            <person name="Rose M."/>
            <person name="Sadaie Y."/>
            <person name="Sato T."/>
            <person name="Scanlan E."/>
            <person name="Schleich S."/>
            <person name="Schroeter R."/>
            <person name="Scoffone F."/>
            <person name="Sekiguchi J."/>
            <person name="Sekowska A."/>
            <person name="Seror S.J."/>
            <person name="Serror P."/>
            <person name="Shin B.-S."/>
            <person name="Soldo B."/>
            <person name="Sorokin A."/>
            <person name="Tacconi E."/>
            <person name="Takagi T."/>
            <person name="Takahashi H."/>
            <person name="Takemaru K."/>
            <person name="Takeuchi M."/>
            <person name="Tamakoshi A."/>
            <person name="Tanaka T."/>
            <person name="Terpstra P."/>
            <person name="Tognoni A."/>
            <person name="Tosato V."/>
            <person name="Uchiyama S."/>
            <person name="Vandenbol M."/>
            <person name="Vannier F."/>
            <person name="Vassarotti A."/>
            <person name="Viari A."/>
            <person name="Wambutt R."/>
            <person name="Wedler E."/>
            <person name="Wedler H."/>
            <person name="Weitzenegger T."/>
            <person name="Winters P."/>
            <person name="Wipat A."/>
            <person name="Yamamoto H."/>
            <person name="Yamane K."/>
            <person name="Yasumoto K."/>
            <person name="Yata K."/>
            <person name="Yoshida K."/>
            <person name="Yoshikawa H.-F."/>
            <person name="Zumstein E."/>
            <person name="Yoshikawa H."/>
            <person name="Danchin A."/>
        </authorList>
    </citation>
    <scope>NUCLEOTIDE SEQUENCE [LARGE SCALE GENOMIC DNA]</scope>
    <source>
        <strain>168</strain>
    </source>
</reference>
<reference key="2">
    <citation type="journal article" date="2009" name="Microbiology">
        <title>From a consortium sequence to a unified sequence: the Bacillus subtilis 168 reference genome a decade later.</title>
        <authorList>
            <person name="Barbe V."/>
            <person name="Cruveiller S."/>
            <person name="Kunst F."/>
            <person name="Lenoble P."/>
            <person name="Meurice G."/>
            <person name="Sekowska A."/>
            <person name="Vallenet D."/>
            <person name="Wang T."/>
            <person name="Moszer I."/>
            <person name="Medigue C."/>
            <person name="Danchin A."/>
        </authorList>
    </citation>
    <scope>SEQUENCE REVISION TO 335</scope>
</reference>
<proteinExistence type="predicted"/>
<dbReference type="EMBL" id="AL009126">
    <property type="protein sequence ID" value="CAB12528.2"/>
    <property type="molecule type" value="Genomic_DNA"/>
</dbReference>
<dbReference type="PIR" id="B69798">
    <property type="entry name" value="B69798"/>
</dbReference>
<dbReference type="RefSeq" id="NP_388590.2">
    <property type="nucleotide sequence ID" value="NC_000964.3"/>
</dbReference>
<dbReference type="RefSeq" id="WP_003243379.1">
    <property type="nucleotide sequence ID" value="NZ_OZ025638.1"/>
</dbReference>
<dbReference type="SMR" id="O31530"/>
<dbReference type="FunCoup" id="O31530">
    <property type="interactions" value="77"/>
</dbReference>
<dbReference type="IntAct" id="O31530">
    <property type="interactions" value="1"/>
</dbReference>
<dbReference type="STRING" id="224308.BSU07090"/>
<dbReference type="PaxDb" id="224308-BSU07090"/>
<dbReference type="EnsemblBacteria" id="CAB12528">
    <property type="protein sequence ID" value="CAB12528"/>
    <property type="gene ID" value="BSU_07090"/>
</dbReference>
<dbReference type="GeneID" id="938776"/>
<dbReference type="KEGG" id="bsu:BSU07090"/>
<dbReference type="PATRIC" id="fig|224308.179.peg.769"/>
<dbReference type="eggNOG" id="ENOG502Z86X">
    <property type="taxonomic scope" value="Bacteria"/>
</dbReference>
<dbReference type="InParanoid" id="O31530"/>
<dbReference type="OrthoDB" id="262615at2"/>
<dbReference type="BioCyc" id="BSUB:BSU07090-MONOMER"/>
<dbReference type="Proteomes" id="UP000001570">
    <property type="component" value="Chromosome"/>
</dbReference>
<dbReference type="InterPro" id="IPR045793">
    <property type="entry name" value="PcRGLX/YetA-like"/>
</dbReference>
<dbReference type="InterPro" id="IPR048330">
    <property type="entry name" value="PcRGLX/YetA_2nd"/>
</dbReference>
<dbReference type="InterPro" id="IPR048331">
    <property type="entry name" value="PcRGLX/YetA_3rd"/>
</dbReference>
<dbReference type="InterPro" id="IPR048329">
    <property type="entry name" value="PcRGLX_1st"/>
</dbReference>
<dbReference type="PANTHER" id="PTHR40081">
    <property type="entry name" value="CONCANAVALIN A-LIKE LECTIN/GLUCANASE"/>
    <property type="match status" value="1"/>
</dbReference>
<dbReference type="PANTHER" id="PTHR40081:SF1">
    <property type="entry name" value="TAT PATHWAY SIGNAL SEQUENCE DOMAIN PROTEIN"/>
    <property type="match status" value="1"/>
</dbReference>
<dbReference type="Pfam" id="PF19501">
    <property type="entry name" value="PcRGLX_1st"/>
    <property type="match status" value="1"/>
</dbReference>
<dbReference type="Pfam" id="PF21345">
    <property type="entry name" value="PcRGLX_2nd"/>
    <property type="match status" value="1"/>
</dbReference>
<dbReference type="Pfam" id="PF21346">
    <property type="entry name" value="PcRGLX_3rd"/>
    <property type="match status" value="1"/>
</dbReference>
<keyword id="KW-1185">Reference proteome</keyword>
<sequence length="857" mass="97601">MKKIKWLSGQPKVTSGVTWGMPWKKGELKKGDRLALMNENAETRYVQSEPSAYWPDGSIKWTKHAAVFGGQENQSFTVHKREVPQPTESLSILETEHDIQVDTGALVCTIHKTGSDFIQSLQINGKPIAAGGRLVAIRETRKESAAKMVLLHERSVSFIKRAAIEQSGPVKAVVKIEGVHVLHKTYEEWLPFVIRLTFYAGLSEIGLVHTQLIDRSGKLEFVKGLGIEFDLFLEGEPYNRHFRFAGEKGMYKEPAQLFGTRKFNERYPLYEKQINGEMLSPDEEHKEWFAHGTQNAVWDDVKIVQDSSDHYSLSKRTGKDYAWVGMLHGSRAKGLCYAGGKNGGVALGLRYFFEKYPSALEITGLAGSRPKMTIWLWPPDGEAMDLRHYTGNTHVASAYEGFDEMRSDPTGIANTNEISLACFSHMPSDEVLNALADKWQAPPLIVCEPDVYYESKALGVWSIIDTSHPLKKELEEQLDAAFLFYKKEVEQRRWYGFWHYGDVMHTYDPIRHMWRYDLGGYAWQNNELVPTLWLWQAFFRSGREDIFRMAEAMTRHTSETDSFHLGEYAGLGSRHNVVHWGCGCKEARISMAGLHKFYYYLTGDDRTGDLLTEVKDADYALVKTDPMRAFYEKGKHPTHARTGPDWAAFCSNWLAEWERTENSEYLKKIETGINCLKRLPLRLLSGPTFEYDPATSMLHHMGDGIAGGYHMIIAFGAPQVWMELAELLDDWEWEDMLSEFGEFYTLSDEEKRKKSGGALHDGHFHWPMFAAGMTAYAARKKQDPHLAAKAWNLLLEDKLSHTPLPIKPERIETWTQLEELPWVTTNTVSQWCLNVIAALELIGDSLPAKKETSGKKG</sequence>
<name>YETA_BACSU</name>
<accession>O31530</accession>
<feature type="chain" id="PRO_0000360530" description="Uncharacterized protein YetA">
    <location>
        <begin position="1"/>
        <end position="857"/>
    </location>
</feature>
<organism>
    <name type="scientific">Bacillus subtilis (strain 168)</name>
    <dbReference type="NCBI Taxonomy" id="224308"/>
    <lineage>
        <taxon>Bacteria</taxon>
        <taxon>Bacillati</taxon>
        <taxon>Bacillota</taxon>
        <taxon>Bacilli</taxon>
        <taxon>Bacillales</taxon>
        <taxon>Bacillaceae</taxon>
        <taxon>Bacillus</taxon>
    </lineage>
</organism>
<protein>
    <recommendedName>
        <fullName>Uncharacterized protein YetA</fullName>
    </recommendedName>
</protein>
<gene>
    <name type="primary">yetA</name>
    <name type="ordered locus">BSU07090</name>
</gene>